<dbReference type="EMBL" id="J01577">
    <property type="protein sequence ID" value="AAA24824.1"/>
    <property type="molecule type" value="Genomic_DNA"/>
</dbReference>
<dbReference type="PIR" id="A03439">
    <property type="entry name" value="NPWCWY"/>
</dbReference>
<dbReference type="RefSeq" id="WP_004157411.1">
    <property type="nucleotide sequence ID" value="NZ_RQKG01000001.1"/>
</dbReference>
<dbReference type="SMR" id="P02939"/>
<dbReference type="OMA" id="QSSAYHK"/>
<dbReference type="GO" id="GO:0009279">
    <property type="term" value="C:cell outer membrane"/>
    <property type="evidence" value="ECO:0007669"/>
    <property type="project" value="UniProtKB-SubCell"/>
</dbReference>
<dbReference type="GO" id="GO:0005576">
    <property type="term" value="C:extracellular region"/>
    <property type="evidence" value="ECO:0007669"/>
    <property type="project" value="UniProtKB-KW"/>
</dbReference>
<dbReference type="GO" id="GO:0008289">
    <property type="term" value="F:lipid binding"/>
    <property type="evidence" value="ECO:0007669"/>
    <property type="project" value="UniProtKB-UniRule"/>
</dbReference>
<dbReference type="GO" id="GO:0042834">
    <property type="term" value="F:peptidoglycan binding"/>
    <property type="evidence" value="ECO:0007669"/>
    <property type="project" value="UniProtKB-UniRule"/>
</dbReference>
<dbReference type="GO" id="GO:0030258">
    <property type="term" value="P:lipid modification"/>
    <property type="evidence" value="ECO:0007669"/>
    <property type="project" value="UniProtKB-UniRule"/>
</dbReference>
<dbReference type="GO" id="GO:0043580">
    <property type="term" value="P:periplasmic space organization"/>
    <property type="evidence" value="ECO:0007669"/>
    <property type="project" value="UniProtKB-UniRule"/>
</dbReference>
<dbReference type="FunFam" id="1.20.5.190:FF:000002">
    <property type="entry name" value="Major outer membrane lipoprotein"/>
    <property type="match status" value="1"/>
</dbReference>
<dbReference type="Gene3D" id="1.20.5.190">
    <property type="match status" value="1"/>
</dbReference>
<dbReference type="HAMAP" id="MF_00843">
    <property type="entry name" value="Lpp"/>
    <property type="match status" value="1"/>
</dbReference>
<dbReference type="InterPro" id="IPR006817">
    <property type="entry name" value="Lipoprotein_leucine-zipper_dom"/>
</dbReference>
<dbReference type="InterPro" id="IPR016367">
    <property type="entry name" value="MOM_Lpp"/>
</dbReference>
<dbReference type="NCBIfam" id="NF040598">
    <property type="entry name" value="Ala_zip_lipo"/>
    <property type="match status" value="1"/>
</dbReference>
<dbReference type="NCBIfam" id="NF011925">
    <property type="entry name" value="PRK15396.1"/>
    <property type="match status" value="1"/>
</dbReference>
<dbReference type="PANTHER" id="PTHR38763:SF1">
    <property type="entry name" value="MAJOR OUTER MEMBRANE LIPOPROTEIN LPP"/>
    <property type="match status" value="1"/>
</dbReference>
<dbReference type="PANTHER" id="PTHR38763">
    <property type="entry name" value="MAJOR OUTER MEMBRANE PROLIPOPROTEIN LPP"/>
    <property type="match status" value="1"/>
</dbReference>
<dbReference type="Pfam" id="PF04728">
    <property type="entry name" value="LPP"/>
    <property type="match status" value="1"/>
</dbReference>
<dbReference type="PIRSF" id="PIRSF002855">
    <property type="entry name" value="Murein-lipoprotein"/>
    <property type="match status" value="1"/>
</dbReference>
<dbReference type="SUPFAM" id="SSF58042">
    <property type="entry name" value="Outer membrane lipoprotein"/>
    <property type="match status" value="1"/>
</dbReference>
<dbReference type="PROSITE" id="PS51257">
    <property type="entry name" value="PROKAR_LIPOPROTEIN"/>
    <property type="match status" value="1"/>
</dbReference>
<reference key="1">
    <citation type="journal article" date="1981" name="J. Biol. Chem.">
        <title>Comparison of the lipoprotein gene among the Enterobacteriaceae. DNA sequence of Erwinia amylovora lipoprotein gene.</title>
        <authorList>
            <person name="Yamagata H."/>
            <person name="Nakamura K."/>
            <person name="Inouye M."/>
        </authorList>
    </citation>
    <scope>NUCLEOTIDE SEQUENCE [GENOMIC DNA]</scope>
</reference>
<name>LPP_ERWAM</name>
<comment type="function">
    <text evidence="1">A highly abundant outer membrane lipoprotein that controls the distance between the inner and outer membranes. The only protein known to be covalently linked to the peptidoglycan network (PGN). Also non-covalently binds the PGN. The link between the cell outer membrane and PGN contributes to maintenance of the structural and functional integrity of the cell envelope, and maintains the correct distance between the PGN and the outer membrane.</text>
</comment>
<comment type="subunit">
    <text evidence="1">Homotrimer.</text>
</comment>
<comment type="subcellular location">
    <subcellularLocation>
        <location evidence="1">Cell outer membrane</location>
        <topology evidence="1">Lipid-anchor</topology>
        <orientation evidence="1">Periplasmic side</orientation>
    </subcellularLocation>
    <subcellularLocation>
        <location evidence="1">Secreted</location>
        <location evidence="1">Cell wall</location>
        <topology evidence="1">Peptidoglycan-anchor</topology>
    </subcellularLocation>
    <text evidence="1">Attached via its lipidated N-terminus to the inner leaflet of the outer membrane. Attached to the peptidoglycan network (PGN) via its C-terminus.</text>
</comment>
<comment type="similarity">
    <text evidence="1">Belongs to the Lpp family.</text>
</comment>
<organism>
    <name type="scientific">Erwinia amylovora</name>
    <name type="common">Fire blight bacteria</name>
    <dbReference type="NCBI Taxonomy" id="552"/>
    <lineage>
        <taxon>Bacteria</taxon>
        <taxon>Pseudomonadati</taxon>
        <taxon>Pseudomonadota</taxon>
        <taxon>Gammaproteobacteria</taxon>
        <taxon>Enterobacterales</taxon>
        <taxon>Erwiniaceae</taxon>
        <taxon>Erwinia</taxon>
    </lineage>
</organism>
<proteinExistence type="inferred from homology"/>
<keyword id="KW-0998">Cell outer membrane</keyword>
<keyword id="KW-0134">Cell wall</keyword>
<keyword id="KW-0175">Coiled coil</keyword>
<keyword id="KW-0449">Lipoprotein</keyword>
<keyword id="KW-0472">Membrane</keyword>
<keyword id="KW-0564">Palmitate</keyword>
<keyword id="KW-0572">Peptidoglycan-anchor</keyword>
<keyword id="KW-0677">Repeat</keyword>
<keyword id="KW-0964">Secreted</keyword>
<keyword id="KW-0732">Signal</keyword>
<gene>
    <name evidence="1" type="primary">lpp</name>
</gene>
<feature type="signal peptide" evidence="1">
    <location>
        <begin position="1"/>
        <end position="20"/>
    </location>
</feature>
<feature type="chain" id="PRO_0000018334" description="Major outer membrane lipoprotein Lpp" evidence="1">
    <location>
        <begin position="21"/>
        <end position="78"/>
    </location>
</feature>
<feature type="repeat" evidence="1">
    <location>
        <begin position="24"/>
        <end position="34"/>
    </location>
</feature>
<feature type="repeat" evidence="1">
    <location>
        <begin position="38"/>
        <end position="48"/>
    </location>
</feature>
<feature type="coiled-coil region" evidence="1">
    <location>
        <begin position="22"/>
        <end position="75"/>
    </location>
</feature>
<feature type="modified residue" description="N6-murein peptidoglycan lysine" evidence="1">
    <location>
        <position position="78"/>
    </location>
</feature>
<feature type="lipid moiety-binding region" description="N-palmitoyl cysteine" evidence="1">
    <location>
        <position position="21"/>
    </location>
</feature>
<feature type="lipid moiety-binding region" description="S-diacylglycerol cysteine" evidence="1">
    <location>
        <position position="21"/>
    </location>
</feature>
<sequence length="78" mass="8369">MNRTKLVLGAVILGSTLLAGCSSNAKIDQLSTDVQTLNAKVDQLSNDVTAIRSDVQAAKDDAARANQRLDNQAHSYRK</sequence>
<protein>
    <recommendedName>
        <fullName evidence="1">Major outer membrane lipoprotein Lpp</fullName>
    </recommendedName>
</protein>
<evidence type="ECO:0000255" key="1">
    <source>
        <dbReference type="HAMAP-Rule" id="MF_00843"/>
    </source>
</evidence>
<accession>P02939</accession>